<gene>
    <name evidence="1" type="primary">gltX1</name>
    <name type="synonym">gltX-1</name>
    <name type="ordered locus">BruAb1_1021</name>
</gene>
<name>SYE1_BRUAB</name>
<sequence>MTVTVRFAPSPTGYIHIGNTRTALSNWLYASKNNGKFILRYDDTDVERSKDEYAQAIAVDLDWLGVRPDRVEYQSKRFDIYAKAVEKLKTAGLLYACYETADELERRRKFRLARRLPPVYGREALKLTDAEKAALEAEGRKPHWRFLLPNFESDPFATQRTEVHWDDLVRGPQTVDLASMSDPILVREDGTYLYTLPSVVDDIDMGVTHIIRGDDHVTNTGVQISIFKALGATPPVFGHHNLLTTISGEGLSKRTGALSVGSLREAGYEPMAVASLAILIGTSESVTAAPDMAALAEHFDLASISKSSAKFDPSELDALNRSLLHEMPFEKAKPRLEALGICGAKAESFWLAVRGNLDRFSDVSHWWQVVSGDLPEAPDLSGEDRDFVRHAFDLLPPEPWNGQTWKSWTEAVKSATGRKGKNLFMPLRLALTGQAHGPELADLLVLVGLERTKSRRP</sequence>
<comment type="function">
    <text evidence="1">Catalyzes the attachment of glutamate to tRNA(Glu) in a two-step reaction: glutamate is first activated by ATP to form Glu-AMP and then transferred to the acceptor end of tRNA(Glu).</text>
</comment>
<comment type="catalytic activity">
    <reaction evidence="1">
        <text>tRNA(Glu) + L-glutamate + ATP = L-glutamyl-tRNA(Glu) + AMP + diphosphate</text>
        <dbReference type="Rhea" id="RHEA:23540"/>
        <dbReference type="Rhea" id="RHEA-COMP:9663"/>
        <dbReference type="Rhea" id="RHEA-COMP:9680"/>
        <dbReference type="ChEBI" id="CHEBI:29985"/>
        <dbReference type="ChEBI" id="CHEBI:30616"/>
        <dbReference type="ChEBI" id="CHEBI:33019"/>
        <dbReference type="ChEBI" id="CHEBI:78442"/>
        <dbReference type="ChEBI" id="CHEBI:78520"/>
        <dbReference type="ChEBI" id="CHEBI:456215"/>
        <dbReference type="EC" id="6.1.1.17"/>
    </reaction>
</comment>
<comment type="subunit">
    <text evidence="1">Monomer.</text>
</comment>
<comment type="subcellular location">
    <subcellularLocation>
        <location evidence="1">Cytoplasm</location>
    </subcellularLocation>
</comment>
<comment type="similarity">
    <text evidence="1">Belongs to the class-I aminoacyl-tRNA synthetase family. Glutamate--tRNA ligase type 1 subfamily.</text>
</comment>
<organism>
    <name type="scientific">Brucella abortus biovar 1 (strain 9-941)</name>
    <dbReference type="NCBI Taxonomy" id="262698"/>
    <lineage>
        <taxon>Bacteria</taxon>
        <taxon>Pseudomonadati</taxon>
        <taxon>Pseudomonadota</taxon>
        <taxon>Alphaproteobacteria</taxon>
        <taxon>Hyphomicrobiales</taxon>
        <taxon>Brucellaceae</taxon>
        <taxon>Brucella/Ochrobactrum group</taxon>
        <taxon>Brucella</taxon>
    </lineage>
</organism>
<keyword id="KW-0030">Aminoacyl-tRNA synthetase</keyword>
<keyword id="KW-0067">ATP-binding</keyword>
<keyword id="KW-0963">Cytoplasm</keyword>
<keyword id="KW-0436">Ligase</keyword>
<keyword id="KW-0547">Nucleotide-binding</keyword>
<keyword id="KW-0648">Protein biosynthesis</keyword>
<proteinExistence type="inferred from homology"/>
<evidence type="ECO:0000255" key="1">
    <source>
        <dbReference type="HAMAP-Rule" id="MF_00022"/>
    </source>
</evidence>
<feature type="chain" id="PRO_0000237343" description="Glutamate--tRNA ligase 1">
    <location>
        <begin position="1"/>
        <end position="457"/>
    </location>
</feature>
<feature type="short sequence motif" description="'HIGH' region" evidence="1">
    <location>
        <begin position="9"/>
        <end position="19"/>
    </location>
</feature>
<feature type="short sequence motif" description="'KMSKS' region" evidence="1">
    <location>
        <begin position="250"/>
        <end position="254"/>
    </location>
</feature>
<feature type="binding site" evidence="1">
    <location>
        <position position="253"/>
    </location>
    <ligand>
        <name>ATP</name>
        <dbReference type="ChEBI" id="CHEBI:30616"/>
    </ligand>
</feature>
<dbReference type="EC" id="6.1.1.17" evidence="1"/>
<dbReference type="EMBL" id="AE017223">
    <property type="protein sequence ID" value="AAX74371.1"/>
    <property type="molecule type" value="Genomic_DNA"/>
</dbReference>
<dbReference type="SMR" id="Q57DB3"/>
<dbReference type="EnsemblBacteria" id="AAX74371">
    <property type="protein sequence ID" value="AAX74371"/>
    <property type="gene ID" value="BruAb1_1021"/>
</dbReference>
<dbReference type="KEGG" id="bmb:BruAb1_1021"/>
<dbReference type="HOGENOM" id="CLU_015768_6_1_5"/>
<dbReference type="Proteomes" id="UP000000540">
    <property type="component" value="Chromosome I"/>
</dbReference>
<dbReference type="GO" id="GO:0005737">
    <property type="term" value="C:cytoplasm"/>
    <property type="evidence" value="ECO:0007669"/>
    <property type="project" value="UniProtKB-SubCell"/>
</dbReference>
<dbReference type="GO" id="GO:0005524">
    <property type="term" value="F:ATP binding"/>
    <property type="evidence" value="ECO:0007669"/>
    <property type="project" value="UniProtKB-UniRule"/>
</dbReference>
<dbReference type="GO" id="GO:0004818">
    <property type="term" value="F:glutamate-tRNA ligase activity"/>
    <property type="evidence" value="ECO:0007669"/>
    <property type="project" value="UniProtKB-UniRule"/>
</dbReference>
<dbReference type="GO" id="GO:0000049">
    <property type="term" value="F:tRNA binding"/>
    <property type="evidence" value="ECO:0007669"/>
    <property type="project" value="InterPro"/>
</dbReference>
<dbReference type="GO" id="GO:0008270">
    <property type="term" value="F:zinc ion binding"/>
    <property type="evidence" value="ECO:0007669"/>
    <property type="project" value="InterPro"/>
</dbReference>
<dbReference type="GO" id="GO:0006424">
    <property type="term" value="P:glutamyl-tRNA aminoacylation"/>
    <property type="evidence" value="ECO:0007669"/>
    <property type="project" value="UniProtKB-UniRule"/>
</dbReference>
<dbReference type="CDD" id="cd00808">
    <property type="entry name" value="GluRS_core"/>
    <property type="match status" value="1"/>
</dbReference>
<dbReference type="Gene3D" id="1.10.10.350">
    <property type="match status" value="1"/>
</dbReference>
<dbReference type="Gene3D" id="3.40.50.620">
    <property type="entry name" value="HUPs"/>
    <property type="match status" value="1"/>
</dbReference>
<dbReference type="HAMAP" id="MF_00022">
    <property type="entry name" value="Glu_tRNA_synth_type1"/>
    <property type="match status" value="1"/>
</dbReference>
<dbReference type="InterPro" id="IPR045462">
    <property type="entry name" value="aa-tRNA-synth_I_cd-bd"/>
</dbReference>
<dbReference type="InterPro" id="IPR020751">
    <property type="entry name" value="aa-tRNA-synth_I_codon-bd_sub2"/>
</dbReference>
<dbReference type="InterPro" id="IPR001412">
    <property type="entry name" value="aa-tRNA-synth_I_CS"/>
</dbReference>
<dbReference type="InterPro" id="IPR008925">
    <property type="entry name" value="aa_tRNA-synth_I_cd-bd_sf"/>
</dbReference>
<dbReference type="InterPro" id="IPR004527">
    <property type="entry name" value="Glu-tRNA-ligase_bac/mito"/>
</dbReference>
<dbReference type="InterPro" id="IPR000924">
    <property type="entry name" value="Glu/Gln-tRNA-synth"/>
</dbReference>
<dbReference type="InterPro" id="IPR020058">
    <property type="entry name" value="Glu/Gln-tRNA-synth_Ib_cat-dom"/>
</dbReference>
<dbReference type="InterPro" id="IPR049940">
    <property type="entry name" value="GluQ/Sye"/>
</dbReference>
<dbReference type="InterPro" id="IPR033910">
    <property type="entry name" value="GluRS_core"/>
</dbReference>
<dbReference type="InterPro" id="IPR014729">
    <property type="entry name" value="Rossmann-like_a/b/a_fold"/>
</dbReference>
<dbReference type="NCBIfam" id="TIGR00464">
    <property type="entry name" value="gltX_bact"/>
    <property type="match status" value="1"/>
</dbReference>
<dbReference type="PANTHER" id="PTHR43311">
    <property type="entry name" value="GLUTAMATE--TRNA LIGASE"/>
    <property type="match status" value="1"/>
</dbReference>
<dbReference type="PANTHER" id="PTHR43311:SF2">
    <property type="entry name" value="GLUTAMATE--TRNA LIGASE, MITOCHONDRIAL-RELATED"/>
    <property type="match status" value="1"/>
</dbReference>
<dbReference type="Pfam" id="PF19269">
    <property type="entry name" value="Anticodon_2"/>
    <property type="match status" value="1"/>
</dbReference>
<dbReference type="Pfam" id="PF00749">
    <property type="entry name" value="tRNA-synt_1c"/>
    <property type="match status" value="1"/>
</dbReference>
<dbReference type="PRINTS" id="PR00987">
    <property type="entry name" value="TRNASYNTHGLU"/>
</dbReference>
<dbReference type="SUPFAM" id="SSF48163">
    <property type="entry name" value="An anticodon-binding domain of class I aminoacyl-tRNA synthetases"/>
    <property type="match status" value="1"/>
</dbReference>
<dbReference type="SUPFAM" id="SSF52374">
    <property type="entry name" value="Nucleotidylyl transferase"/>
    <property type="match status" value="1"/>
</dbReference>
<dbReference type="PROSITE" id="PS00178">
    <property type="entry name" value="AA_TRNA_LIGASE_I"/>
    <property type="match status" value="1"/>
</dbReference>
<protein>
    <recommendedName>
        <fullName evidence="1">Glutamate--tRNA ligase 1</fullName>
        <ecNumber evidence="1">6.1.1.17</ecNumber>
    </recommendedName>
    <alternativeName>
        <fullName evidence="1">Glutamyl-tRNA synthetase 1</fullName>
        <shortName evidence="1">GluRS 1</shortName>
    </alternativeName>
</protein>
<accession>Q57DB3</accession>
<reference key="1">
    <citation type="journal article" date="2005" name="J. Bacteriol.">
        <title>Completion of the genome sequence of Brucella abortus and comparison to the highly similar genomes of Brucella melitensis and Brucella suis.</title>
        <authorList>
            <person name="Halling S.M."/>
            <person name="Peterson-Burch B.D."/>
            <person name="Bricker B.J."/>
            <person name="Zuerner R.L."/>
            <person name="Qing Z."/>
            <person name="Li L.-L."/>
            <person name="Kapur V."/>
            <person name="Alt D.P."/>
            <person name="Olsen S.C."/>
        </authorList>
    </citation>
    <scope>NUCLEOTIDE SEQUENCE [LARGE SCALE GENOMIC DNA]</scope>
    <source>
        <strain>9-941</strain>
    </source>
</reference>